<organism>
    <name type="scientific">Arabidopsis thaliana</name>
    <name type="common">Mouse-ear cress</name>
    <dbReference type="NCBI Taxonomy" id="3702"/>
    <lineage>
        <taxon>Eukaryota</taxon>
        <taxon>Viridiplantae</taxon>
        <taxon>Streptophyta</taxon>
        <taxon>Embryophyta</taxon>
        <taxon>Tracheophyta</taxon>
        <taxon>Spermatophyta</taxon>
        <taxon>Magnoliopsida</taxon>
        <taxon>eudicotyledons</taxon>
        <taxon>Gunneridae</taxon>
        <taxon>Pentapetalae</taxon>
        <taxon>rosids</taxon>
        <taxon>malvids</taxon>
        <taxon>Brassicales</taxon>
        <taxon>Brassicaceae</taxon>
        <taxon>Camelineae</taxon>
        <taxon>Arabidopsis</taxon>
    </lineage>
</organism>
<evidence type="ECO:0000255" key="1"/>
<evidence type="ECO:0000255" key="2">
    <source>
        <dbReference type="PROSITE-ProRule" id="PRU00041"/>
    </source>
</evidence>
<evidence type="ECO:0000256" key="3">
    <source>
        <dbReference type="SAM" id="MobiDB-lite"/>
    </source>
</evidence>
<evidence type="ECO:0000269" key="4">
    <source>
    </source>
</evidence>
<evidence type="ECO:0000303" key="5">
    <source>
    </source>
</evidence>
<evidence type="ECO:0000305" key="6"/>
<evidence type="ECO:0000312" key="7">
    <source>
        <dbReference type="Araport" id="AT3G61300"/>
    </source>
</evidence>
<evidence type="ECO:0000312" key="8">
    <source>
        <dbReference type="EMBL" id="CAB71060.1"/>
    </source>
</evidence>
<name>MCTP8_ARATH</name>
<feature type="chain" id="PRO_0000457902" description="Multiple C2 domain and transmembrane region protein 8">
    <location>
        <begin position="1"/>
        <end position="972"/>
    </location>
</feature>
<feature type="transmembrane region" description="Helical" evidence="1">
    <location>
        <begin position="803"/>
        <end position="823"/>
    </location>
</feature>
<feature type="transmembrane region" description="Helical" evidence="1">
    <location>
        <begin position="924"/>
        <end position="944"/>
    </location>
</feature>
<feature type="domain" description="C2 1" evidence="2">
    <location>
        <begin position="1"/>
        <end position="107"/>
    </location>
</feature>
<feature type="domain" description="C2 2" evidence="2">
    <location>
        <begin position="232"/>
        <end position="352"/>
    </location>
</feature>
<feature type="domain" description="C2 3" evidence="2">
    <location>
        <begin position="384"/>
        <end position="507"/>
    </location>
</feature>
<feature type="domain" description="C2 4" evidence="2">
    <location>
        <begin position="543"/>
        <end position="669"/>
    </location>
</feature>
<feature type="region of interest" description="Disordered" evidence="3">
    <location>
        <begin position="142"/>
        <end position="203"/>
    </location>
</feature>
<feature type="compositionally biased region" description="Basic residues" evidence="3">
    <location>
        <begin position="150"/>
        <end position="159"/>
    </location>
</feature>
<feature type="compositionally biased region" description="Polar residues" evidence="3">
    <location>
        <begin position="161"/>
        <end position="173"/>
    </location>
</feature>
<feature type="compositionally biased region" description="Pro residues" evidence="3">
    <location>
        <begin position="179"/>
        <end position="194"/>
    </location>
</feature>
<feature type="binding site" evidence="2">
    <location>
        <position position="265"/>
    </location>
    <ligand>
        <name>Ca(2+)</name>
        <dbReference type="ChEBI" id="CHEBI:29108"/>
        <label>1</label>
    </ligand>
</feature>
<feature type="binding site" evidence="2">
    <location>
        <position position="265"/>
    </location>
    <ligand>
        <name>Ca(2+)</name>
        <dbReference type="ChEBI" id="CHEBI:29108"/>
        <label>2</label>
    </ligand>
</feature>
<feature type="binding site" evidence="2">
    <location>
        <position position="271"/>
    </location>
    <ligand>
        <name>Ca(2+)</name>
        <dbReference type="ChEBI" id="CHEBI:29108"/>
        <label>1</label>
    </ligand>
</feature>
<feature type="binding site" evidence="2">
    <location>
        <position position="318"/>
    </location>
    <ligand>
        <name>Ca(2+)</name>
        <dbReference type="ChEBI" id="CHEBI:29108"/>
        <label>1</label>
    </ligand>
</feature>
<feature type="binding site" evidence="2">
    <location>
        <position position="318"/>
    </location>
    <ligand>
        <name>Ca(2+)</name>
        <dbReference type="ChEBI" id="CHEBI:29108"/>
        <label>2</label>
    </ligand>
</feature>
<feature type="binding site" evidence="2">
    <location>
        <position position="320"/>
    </location>
    <ligand>
        <name>Ca(2+)</name>
        <dbReference type="ChEBI" id="CHEBI:29108"/>
        <label>1</label>
    </ligand>
</feature>
<feature type="binding site" evidence="2">
    <location>
        <position position="320"/>
    </location>
    <ligand>
        <name>Ca(2+)</name>
        <dbReference type="ChEBI" id="CHEBI:29108"/>
        <label>2</label>
    </ligand>
</feature>
<feature type="binding site" evidence="2">
    <location>
        <position position="325"/>
    </location>
    <ligand>
        <name>Ca(2+)</name>
        <dbReference type="ChEBI" id="CHEBI:29108"/>
        <label>2</label>
    </ligand>
</feature>
<accession>Q9M2D4</accession>
<gene>
    <name evidence="5" type="primary">MCTP8</name>
    <name evidence="7" type="ordered locus">At3g61300</name>
    <name evidence="8" type="ORF">T20K12.200</name>
</gene>
<comment type="function">
    <text evidence="5">May function as a signaling molecule by regulating the trafficking of other regulators.</text>
</comment>
<comment type="cofactor">
    <cofactor evidence="2">
        <name>Ca(2+)</name>
        <dbReference type="ChEBI" id="CHEBI:29108"/>
    </cofactor>
</comment>
<comment type="subcellular location">
    <subcellularLocation>
        <location evidence="1">Membrane</location>
        <topology evidence="1">Multi-pass membrane protein</topology>
    </subcellularLocation>
    <subcellularLocation>
        <location evidence="4">Vesicle</location>
    </subcellularLocation>
    <text evidence="4">Localized in small structures within cells.</text>
</comment>
<comment type="tissue specificity">
    <text evidence="4">Expressed in root hairs.</text>
</comment>
<comment type="similarity">
    <text evidence="6">Belongs to the MCTP family.</text>
</comment>
<proteinExistence type="evidence at transcript level"/>
<protein>
    <recommendedName>
        <fullName evidence="5">Multiple C2 domain and transmembrane region protein 8</fullName>
    </recommendedName>
</protein>
<sequence length="972" mass="110778">MMSNLKLGVEVISARLKPREDYGGVNAYVELRFDDQKVITMTKIDDSSPVWNEKFFFNISDTEDLSNQFLDAYVYNKTSSITKSCLGKIRILGTAFLPYSEAVGLPYPLEKEKWSMFSSAAANGGELALKVFLTDNPSPKVPNLISTKKIPSKSRHKFHNIPTNESNHSPRGNQQSFQPQPPPPQSQTALPPPMMESSLYQAPRFGTPIPTTMGFNPNPPDYSIKETKPILGGGKRARSSDHDLVEPMEFLFIKIVKARNLPSMDLTGSLDPYIEVKLGNYTGKTKHFEKNQNPVWNEVFAFSKSNQQSNVLEVIVMDKDMVKDDFVGLIRFDLNQIPTRVAPDSPLAPEWYRVNNEKGGEIMLAVWFGTQADEAFSDATYSDALNAVNKSSLRSKVYHSPRLWYLRVNVIEAQDLVIVPDRTRLPNPYVKIRLNNQVVRTKPSHSLNPRWNEEFTLVAAEPFEDLIISIEDRVAPNREETLGEVHIPIGTIDKRIDDNRTVPNRWFSLKTENQRRVRFATTRLHLNVCLEGGYHVLDESTYYSSDFRPSMKELLSHKQPSFGVLELGILRIEGLNLSQEGKKETVDAYCVAKYGTKWVRTRTVTNCLNPRFNEQYTWEVYEPATVITIGVFDNNQINSGNGNKGDGKIGKIRVRISTLEAGRIYSHSYPLLVLRPSGLKKMGELHLAIRFSCSSMFQMLMQYWKPLLPKMHYARPLKVVQQEILRQHAVNLVAARLSRAEPPLRKEVVEYISDSNSHLWSMRKSRANLFRLSSVFSGLLGTGEWFQDICRWKKPVETTAIHIIFLVLVCSPEMILPVMSLCLFMLGVWNYRLRPRQPPHMDTRLSFADNIHPEELNEEFDTFPFSSQDPGIVKMRYERLRSIASRAQTVVGDIAGQGERVQALLSWRDPRATSIFMVLCLVSTVVLYVVPFKVFVLLAGLYIMRPPRFRGKTPPGPINFFRRLPAKTDCML</sequence>
<reference key="1">
    <citation type="journal article" date="2000" name="Nature">
        <title>Sequence and analysis of chromosome 3 of the plant Arabidopsis thaliana.</title>
        <authorList>
            <person name="Salanoubat M."/>
            <person name="Lemcke K."/>
            <person name="Rieger M."/>
            <person name="Ansorge W."/>
            <person name="Unseld M."/>
            <person name="Fartmann B."/>
            <person name="Valle G."/>
            <person name="Bloecker H."/>
            <person name="Perez-Alonso M."/>
            <person name="Obermaier B."/>
            <person name="Delseny M."/>
            <person name="Boutry M."/>
            <person name="Grivell L.A."/>
            <person name="Mache R."/>
            <person name="Puigdomenech P."/>
            <person name="De Simone V."/>
            <person name="Choisne N."/>
            <person name="Artiguenave F."/>
            <person name="Robert C."/>
            <person name="Brottier P."/>
            <person name="Wincker P."/>
            <person name="Cattolico L."/>
            <person name="Weissenbach J."/>
            <person name="Saurin W."/>
            <person name="Quetier F."/>
            <person name="Schaefer M."/>
            <person name="Mueller-Auer S."/>
            <person name="Gabel C."/>
            <person name="Fuchs M."/>
            <person name="Benes V."/>
            <person name="Wurmbach E."/>
            <person name="Drzonek H."/>
            <person name="Erfle H."/>
            <person name="Jordan N."/>
            <person name="Bangert S."/>
            <person name="Wiedelmann R."/>
            <person name="Kranz H."/>
            <person name="Voss H."/>
            <person name="Holland R."/>
            <person name="Brandt P."/>
            <person name="Nyakatura G."/>
            <person name="Vezzi A."/>
            <person name="D'Angelo M."/>
            <person name="Pallavicini A."/>
            <person name="Toppo S."/>
            <person name="Simionati B."/>
            <person name="Conrad A."/>
            <person name="Hornischer K."/>
            <person name="Kauer G."/>
            <person name="Loehnert T.-H."/>
            <person name="Nordsiek G."/>
            <person name="Reichelt J."/>
            <person name="Scharfe M."/>
            <person name="Schoen O."/>
            <person name="Bargues M."/>
            <person name="Terol J."/>
            <person name="Climent J."/>
            <person name="Navarro P."/>
            <person name="Collado C."/>
            <person name="Perez-Perez A."/>
            <person name="Ottenwaelder B."/>
            <person name="Duchemin D."/>
            <person name="Cooke R."/>
            <person name="Laudie M."/>
            <person name="Berger-Llauro C."/>
            <person name="Purnelle B."/>
            <person name="Masuy D."/>
            <person name="de Haan M."/>
            <person name="Maarse A.C."/>
            <person name="Alcaraz J.-P."/>
            <person name="Cottet A."/>
            <person name="Casacuberta E."/>
            <person name="Monfort A."/>
            <person name="Argiriou A."/>
            <person name="Flores M."/>
            <person name="Liguori R."/>
            <person name="Vitale D."/>
            <person name="Mannhaupt G."/>
            <person name="Haase D."/>
            <person name="Schoof H."/>
            <person name="Rudd S."/>
            <person name="Zaccaria P."/>
            <person name="Mewes H.-W."/>
            <person name="Mayer K.F.X."/>
            <person name="Kaul S."/>
            <person name="Town C.D."/>
            <person name="Koo H.L."/>
            <person name="Tallon L.J."/>
            <person name="Jenkins J."/>
            <person name="Rooney T."/>
            <person name="Rizzo M."/>
            <person name="Walts A."/>
            <person name="Utterback T."/>
            <person name="Fujii C.Y."/>
            <person name="Shea T.P."/>
            <person name="Creasy T.H."/>
            <person name="Haas B."/>
            <person name="Maiti R."/>
            <person name="Wu D."/>
            <person name="Peterson J."/>
            <person name="Van Aken S."/>
            <person name="Pai G."/>
            <person name="Militscher J."/>
            <person name="Sellers P."/>
            <person name="Gill J.E."/>
            <person name="Feldblyum T.V."/>
            <person name="Preuss D."/>
            <person name="Lin X."/>
            <person name="Nierman W.C."/>
            <person name="Salzberg S.L."/>
            <person name="White O."/>
            <person name="Venter J.C."/>
            <person name="Fraser C.M."/>
            <person name="Kaneko T."/>
            <person name="Nakamura Y."/>
            <person name="Sato S."/>
            <person name="Kato T."/>
            <person name="Asamizu E."/>
            <person name="Sasamoto S."/>
            <person name="Kimura T."/>
            <person name="Idesawa K."/>
            <person name="Kawashima K."/>
            <person name="Kishida Y."/>
            <person name="Kiyokawa C."/>
            <person name="Kohara M."/>
            <person name="Matsumoto M."/>
            <person name="Matsuno A."/>
            <person name="Muraki A."/>
            <person name="Nakayama S."/>
            <person name="Nakazaki N."/>
            <person name="Shinpo S."/>
            <person name="Takeuchi C."/>
            <person name="Wada T."/>
            <person name="Watanabe A."/>
            <person name="Yamada M."/>
            <person name="Yasuda M."/>
            <person name="Tabata S."/>
        </authorList>
    </citation>
    <scope>NUCLEOTIDE SEQUENCE [LARGE SCALE GENOMIC DNA]</scope>
    <source>
        <strain>cv. Columbia</strain>
    </source>
</reference>
<reference key="2">
    <citation type="journal article" date="2017" name="Plant J.">
        <title>Araport11: a complete reannotation of the Arabidopsis thaliana reference genome.</title>
        <authorList>
            <person name="Cheng C.Y."/>
            <person name="Krishnakumar V."/>
            <person name="Chan A.P."/>
            <person name="Thibaud-Nissen F."/>
            <person name="Schobel S."/>
            <person name="Town C.D."/>
        </authorList>
    </citation>
    <scope>GENOME REANNOTATION</scope>
    <source>
        <strain>cv. Columbia</strain>
    </source>
</reference>
<reference key="3">
    <citation type="journal article" date="2003" name="Science">
        <title>Empirical analysis of transcriptional activity in the Arabidopsis genome.</title>
        <authorList>
            <person name="Yamada K."/>
            <person name="Lim J."/>
            <person name="Dale J.M."/>
            <person name="Chen H."/>
            <person name="Shinn P."/>
            <person name="Palm C.J."/>
            <person name="Southwick A.M."/>
            <person name="Wu H.C."/>
            <person name="Kim C.J."/>
            <person name="Nguyen M."/>
            <person name="Pham P.K."/>
            <person name="Cheuk R.F."/>
            <person name="Karlin-Newmann G."/>
            <person name="Liu S.X."/>
            <person name="Lam B."/>
            <person name="Sakano H."/>
            <person name="Wu T."/>
            <person name="Yu G."/>
            <person name="Miranda M."/>
            <person name="Quach H.L."/>
            <person name="Tripp M."/>
            <person name="Chang C.H."/>
            <person name="Lee J.M."/>
            <person name="Toriumi M.J."/>
            <person name="Chan M.M."/>
            <person name="Tang C.C."/>
            <person name="Onodera C.S."/>
            <person name="Deng J.M."/>
            <person name="Akiyama K."/>
            <person name="Ansari Y."/>
            <person name="Arakawa T."/>
            <person name="Banh J."/>
            <person name="Banno F."/>
            <person name="Bowser L."/>
            <person name="Brooks S.Y."/>
            <person name="Carninci P."/>
            <person name="Chao Q."/>
            <person name="Choy N."/>
            <person name="Enju A."/>
            <person name="Goldsmith A.D."/>
            <person name="Gurjal M."/>
            <person name="Hansen N.F."/>
            <person name="Hayashizaki Y."/>
            <person name="Johnson-Hopson C."/>
            <person name="Hsuan V.W."/>
            <person name="Iida K."/>
            <person name="Karnes M."/>
            <person name="Khan S."/>
            <person name="Koesema E."/>
            <person name="Ishida J."/>
            <person name="Jiang P.X."/>
            <person name="Jones T."/>
            <person name="Kawai J."/>
            <person name="Kamiya A."/>
            <person name="Meyers C."/>
            <person name="Nakajima M."/>
            <person name="Narusaka M."/>
            <person name="Seki M."/>
            <person name="Sakurai T."/>
            <person name="Satou M."/>
            <person name="Tamse R."/>
            <person name="Vaysberg M."/>
            <person name="Wallender E.K."/>
            <person name="Wong C."/>
            <person name="Yamamura Y."/>
            <person name="Yuan S."/>
            <person name="Shinozaki K."/>
            <person name="Davis R.W."/>
            <person name="Theologis A."/>
            <person name="Ecker J.R."/>
        </authorList>
    </citation>
    <scope>NUCLEOTIDE SEQUENCE [LARGE SCALE MRNA]</scope>
    <source>
        <strain>cv. Columbia</strain>
    </source>
</reference>
<reference key="4">
    <citation type="journal article" date="2018" name="Plant Physiol.">
        <title>Characterization of multiple C2 domain and transmembrane region proteins in Arabidopsis.</title>
        <authorList>
            <person name="Liu L."/>
            <person name="Li C."/>
            <person name="Liang Z."/>
            <person name="Yu H."/>
        </authorList>
    </citation>
    <scope>TISSUE SPECIFICITY</scope>
    <scope>SUBCELLULAR LOCATION</scope>
    <scope>GENE FAMILY</scope>
    <scope>NOMENCLATURE</scope>
    <source>
        <strain>cv. Columbia</strain>
    </source>
</reference>
<dbReference type="EMBL" id="AL137898">
    <property type="protein sequence ID" value="CAB71060.1"/>
    <property type="molecule type" value="Genomic_DNA"/>
</dbReference>
<dbReference type="EMBL" id="CP002686">
    <property type="protein sequence ID" value="AEE80185.1"/>
    <property type="molecule type" value="Genomic_DNA"/>
</dbReference>
<dbReference type="EMBL" id="BT003856">
    <property type="protein sequence ID" value="AAO41906.1"/>
    <property type="molecule type" value="mRNA"/>
</dbReference>
<dbReference type="EMBL" id="BT005687">
    <property type="protein sequence ID" value="AAO64107.1"/>
    <property type="molecule type" value="mRNA"/>
</dbReference>
<dbReference type="PIR" id="T47922">
    <property type="entry name" value="T47922"/>
</dbReference>
<dbReference type="RefSeq" id="NP_191689.1">
    <property type="nucleotide sequence ID" value="NM_115994.4"/>
</dbReference>
<dbReference type="SMR" id="Q9M2D4"/>
<dbReference type="FunCoup" id="Q9M2D4">
    <property type="interactions" value="212"/>
</dbReference>
<dbReference type="IntAct" id="Q9M2D4">
    <property type="interactions" value="1"/>
</dbReference>
<dbReference type="STRING" id="3702.Q9M2D4"/>
<dbReference type="iPTMnet" id="Q9M2D4"/>
<dbReference type="PaxDb" id="3702-AT3G61300.1"/>
<dbReference type="ProteomicsDB" id="189919"/>
<dbReference type="EnsemblPlants" id="AT3G61300.1">
    <property type="protein sequence ID" value="AT3G61300.1"/>
    <property type="gene ID" value="AT3G61300"/>
</dbReference>
<dbReference type="GeneID" id="825302"/>
<dbReference type="Gramene" id="AT3G61300.1">
    <property type="protein sequence ID" value="AT3G61300.1"/>
    <property type="gene ID" value="AT3G61300"/>
</dbReference>
<dbReference type="KEGG" id="ath:AT3G61300"/>
<dbReference type="Araport" id="AT3G61300"/>
<dbReference type="TAIR" id="AT3G61300">
    <property type="gene designation" value="MCTP8"/>
</dbReference>
<dbReference type="eggNOG" id="ENOG502QR9H">
    <property type="taxonomic scope" value="Eukaryota"/>
</dbReference>
<dbReference type="HOGENOM" id="CLU_003762_1_0_1"/>
<dbReference type="InParanoid" id="Q9M2D4"/>
<dbReference type="OMA" id="FADNIHP"/>
<dbReference type="PRO" id="PR:Q9M2D4"/>
<dbReference type="Proteomes" id="UP000006548">
    <property type="component" value="Chromosome 3"/>
</dbReference>
<dbReference type="ExpressionAtlas" id="Q9M2D4">
    <property type="expression patterns" value="baseline and differential"/>
</dbReference>
<dbReference type="GO" id="GO:0016020">
    <property type="term" value="C:membrane"/>
    <property type="evidence" value="ECO:0007669"/>
    <property type="project" value="UniProtKB-SubCell"/>
</dbReference>
<dbReference type="GO" id="GO:0031982">
    <property type="term" value="C:vesicle"/>
    <property type="evidence" value="ECO:0000314"/>
    <property type="project" value="TAIR"/>
</dbReference>
<dbReference type="GO" id="GO:0046872">
    <property type="term" value="F:metal ion binding"/>
    <property type="evidence" value="ECO:0007669"/>
    <property type="project" value="UniProtKB-KW"/>
</dbReference>
<dbReference type="CDD" id="cd08378">
    <property type="entry name" value="C2B_MCTP_PRT_plant"/>
    <property type="match status" value="1"/>
</dbReference>
<dbReference type="CDD" id="cd04019">
    <property type="entry name" value="C2C_MCTP_PRT_plant"/>
    <property type="match status" value="1"/>
</dbReference>
<dbReference type="CDD" id="cd08379">
    <property type="entry name" value="C2D_MCTP_PRT_plant"/>
    <property type="match status" value="1"/>
</dbReference>
<dbReference type="FunFam" id="2.60.40.150:FF:000323">
    <property type="entry name" value="C2 calcium/lipid-binding plant phosphoribosyltransferase family protein"/>
    <property type="match status" value="1"/>
</dbReference>
<dbReference type="FunFam" id="2.60.40.150:FF:000090">
    <property type="entry name" value="C2 domain-containing protein"/>
    <property type="match status" value="1"/>
</dbReference>
<dbReference type="FunFam" id="2.60.40.150:FF:000119">
    <property type="entry name" value="C2 domain-containing protein"/>
    <property type="match status" value="1"/>
</dbReference>
<dbReference type="FunFam" id="2.60.40.150:FF:000128">
    <property type="entry name" value="C2 domain-containing protein"/>
    <property type="match status" value="1"/>
</dbReference>
<dbReference type="Gene3D" id="2.60.40.150">
    <property type="entry name" value="C2 domain"/>
    <property type="match status" value="4"/>
</dbReference>
<dbReference type="InterPro" id="IPR000008">
    <property type="entry name" value="C2_dom"/>
</dbReference>
<dbReference type="InterPro" id="IPR035892">
    <property type="entry name" value="C2_domain_sf"/>
</dbReference>
<dbReference type="InterPro" id="IPR047257">
    <property type="entry name" value="C2B_MCTP_PRT_plant"/>
</dbReference>
<dbReference type="InterPro" id="IPR047258">
    <property type="entry name" value="C2C_MCTP_PRT_plant"/>
</dbReference>
<dbReference type="InterPro" id="IPR047255">
    <property type="entry name" value="C2D_MCTP_PRT_plant"/>
</dbReference>
<dbReference type="InterPro" id="IPR013583">
    <property type="entry name" value="MCTP_C"/>
</dbReference>
<dbReference type="InterPro" id="IPR047259">
    <property type="entry name" value="QUIRKY-like"/>
</dbReference>
<dbReference type="PANTHER" id="PTHR31425:SF30">
    <property type="entry name" value="MULTIPLE C2 DOMAIN AND TRANSMEMBRANE REGION PROTEIN 8"/>
    <property type="match status" value="1"/>
</dbReference>
<dbReference type="PANTHER" id="PTHR31425">
    <property type="entry name" value="PHOSPHORIBOSYLANTHRANILATE TRANSFERASE ISOFORM 1"/>
    <property type="match status" value="1"/>
</dbReference>
<dbReference type="Pfam" id="PF00168">
    <property type="entry name" value="C2"/>
    <property type="match status" value="4"/>
</dbReference>
<dbReference type="Pfam" id="PF08372">
    <property type="entry name" value="PRT_C"/>
    <property type="match status" value="1"/>
</dbReference>
<dbReference type="SMART" id="SM00239">
    <property type="entry name" value="C2"/>
    <property type="match status" value="4"/>
</dbReference>
<dbReference type="SUPFAM" id="SSF49562">
    <property type="entry name" value="C2 domain (Calcium/lipid-binding domain, CaLB)"/>
    <property type="match status" value="4"/>
</dbReference>
<dbReference type="PROSITE" id="PS50004">
    <property type="entry name" value="C2"/>
    <property type="match status" value="4"/>
</dbReference>
<keyword id="KW-0106">Calcium</keyword>
<keyword id="KW-0472">Membrane</keyword>
<keyword id="KW-0479">Metal-binding</keyword>
<keyword id="KW-1185">Reference proteome</keyword>
<keyword id="KW-0677">Repeat</keyword>
<keyword id="KW-0812">Transmembrane</keyword>
<keyword id="KW-1133">Transmembrane helix</keyword>